<gene>
    <name evidence="3" type="primary">BIC2</name>
    <name evidence="4" type="ordered locus">At3g44450</name>
    <name evidence="5" type="ORF">T22K7.130</name>
</gene>
<sequence>MKNTNLPEETKEPISPGSSHRKQNKTGTKTCFPETTVLSGRDRLKRHREEVAGKVPIPDSWGKEGLLMGWMDFSTFDAAFTSSQIVSARAALMADSGDDAGARGSRPQRLRVESSC</sequence>
<feature type="chain" id="PRO_0000438704" description="Protein BIC2">
    <location>
        <begin position="1"/>
        <end position="116"/>
    </location>
</feature>
<feature type="region of interest" description="Disordered" evidence="1">
    <location>
        <begin position="1"/>
        <end position="33"/>
    </location>
</feature>
<feature type="region of interest" description="Disordered" evidence="1">
    <location>
        <begin position="95"/>
        <end position="116"/>
    </location>
</feature>
<feature type="helix" evidence="6">
    <location>
        <begin position="40"/>
        <end position="51"/>
    </location>
</feature>
<feature type="helix" evidence="6">
    <location>
        <begin position="64"/>
        <end position="66"/>
    </location>
</feature>
<feature type="turn" evidence="6">
    <location>
        <begin position="67"/>
        <end position="69"/>
    </location>
</feature>
<feature type="helix" evidence="6">
    <location>
        <begin position="77"/>
        <end position="80"/>
    </location>
</feature>
<feature type="helix" evidence="6">
    <location>
        <begin position="83"/>
        <end position="94"/>
    </location>
</feature>
<keyword id="KW-0002">3D-structure</keyword>
<keyword id="KW-0539">Nucleus</keyword>
<keyword id="KW-1185">Reference proteome</keyword>
<reference key="1">
    <citation type="journal article" date="2000" name="Nature">
        <title>Sequence and analysis of chromosome 3 of the plant Arabidopsis thaliana.</title>
        <authorList>
            <person name="Salanoubat M."/>
            <person name="Lemcke K."/>
            <person name="Rieger M."/>
            <person name="Ansorge W."/>
            <person name="Unseld M."/>
            <person name="Fartmann B."/>
            <person name="Valle G."/>
            <person name="Bloecker H."/>
            <person name="Perez-Alonso M."/>
            <person name="Obermaier B."/>
            <person name="Delseny M."/>
            <person name="Boutry M."/>
            <person name="Grivell L.A."/>
            <person name="Mache R."/>
            <person name="Puigdomenech P."/>
            <person name="De Simone V."/>
            <person name="Choisne N."/>
            <person name="Artiguenave F."/>
            <person name="Robert C."/>
            <person name="Brottier P."/>
            <person name="Wincker P."/>
            <person name="Cattolico L."/>
            <person name="Weissenbach J."/>
            <person name="Saurin W."/>
            <person name="Quetier F."/>
            <person name="Schaefer M."/>
            <person name="Mueller-Auer S."/>
            <person name="Gabel C."/>
            <person name="Fuchs M."/>
            <person name="Benes V."/>
            <person name="Wurmbach E."/>
            <person name="Drzonek H."/>
            <person name="Erfle H."/>
            <person name="Jordan N."/>
            <person name="Bangert S."/>
            <person name="Wiedelmann R."/>
            <person name="Kranz H."/>
            <person name="Voss H."/>
            <person name="Holland R."/>
            <person name="Brandt P."/>
            <person name="Nyakatura G."/>
            <person name="Vezzi A."/>
            <person name="D'Angelo M."/>
            <person name="Pallavicini A."/>
            <person name="Toppo S."/>
            <person name="Simionati B."/>
            <person name="Conrad A."/>
            <person name="Hornischer K."/>
            <person name="Kauer G."/>
            <person name="Loehnert T.-H."/>
            <person name="Nordsiek G."/>
            <person name="Reichelt J."/>
            <person name="Scharfe M."/>
            <person name="Schoen O."/>
            <person name="Bargues M."/>
            <person name="Terol J."/>
            <person name="Climent J."/>
            <person name="Navarro P."/>
            <person name="Collado C."/>
            <person name="Perez-Perez A."/>
            <person name="Ottenwaelder B."/>
            <person name="Duchemin D."/>
            <person name="Cooke R."/>
            <person name="Laudie M."/>
            <person name="Berger-Llauro C."/>
            <person name="Purnelle B."/>
            <person name="Masuy D."/>
            <person name="de Haan M."/>
            <person name="Maarse A.C."/>
            <person name="Alcaraz J.-P."/>
            <person name="Cottet A."/>
            <person name="Casacuberta E."/>
            <person name="Monfort A."/>
            <person name="Argiriou A."/>
            <person name="Flores M."/>
            <person name="Liguori R."/>
            <person name="Vitale D."/>
            <person name="Mannhaupt G."/>
            <person name="Haase D."/>
            <person name="Schoof H."/>
            <person name="Rudd S."/>
            <person name="Zaccaria P."/>
            <person name="Mewes H.-W."/>
            <person name="Mayer K.F.X."/>
            <person name="Kaul S."/>
            <person name="Town C.D."/>
            <person name="Koo H.L."/>
            <person name="Tallon L.J."/>
            <person name="Jenkins J."/>
            <person name="Rooney T."/>
            <person name="Rizzo M."/>
            <person name="Walts A."/>
            <person name="Utterback T."/>
            <person name="Fujii C.Y."/>
            <person name="Shea T.P."/>
            <person name="Creasy T.H."/>
            <person name="Haas B."/>
            <person name="Maiti R."/>
            <person name="Wu D."/>
            <person name="Peterson J."/>
            <person name="Van Aken S."/>
            <person name="Pai G."/>
            <person name="Militscher J."/>
            <person name="Sellers P."/>
            <person name="Gill J.E."/>
            <person name="Feldblyum T.V."/>
            <person name="Preuss D."/>
            <person name="Lin X."/>
            <person name="Nierman W.C."/>
            <person name="Salzberg S.L."/>
            <person name="White O."/>
            <person name="Venter J.C."/>
            <person name="Fraser C.M."/>
            <person name="Kaneko T."/>
            <person name="Nakamura Y."/>
            <person name="Sato S."/>
            <person name="Kato T."/>
            <person name="Asamizu E."/>
            <person name="Sasamoto S."/>
            <person name="Kimura T."/>
            <person name="Idesawa K."/>
            <person name="Kawashima K."/>
            <person name="Kishida Y."/>
            <person name="Kiyokawa C."/>
            <person name="Kohara M."/>
            <person name="Matsumoto M."/>
            <person name="Matsuno A."/>
            <person name="Muraki A."/>
            <person name="Nakayama S."/>
            <person name="Nakazaki N."/>
            <person name="Shinpo S."/>
            <person name="Takeuchi C."/>
            <person name="Wada T."/>
            <person name="Watanabe A."/>
            <person name="Yamada M."/>
            <person name="Yasuda M."/>
            <person name="Tabata S."/>
        </authorList>
    </citation>
    <scope>NUCLEOTIDE SEQUENCE [LARGE SCALE GENOMIC DNA]</scope>
    <source>
        <strain>cv. Columbia</strain>
    </source>
</reference>
<reference key="2">
    <citation type="journal article" date="2017" name="Plant J.">
        <title>Araport11: a complete reannotation of the Arabidopsis thaliana reference genome.</title>
        <authorList>
            <person name="Cheng C.Y."/>
            <person name="Krishnakumar V."/>
            <person name="Chan A.P."/>
            <person name="Thibaud-Nissen F."/>
            <person name="Schobel S."/>
            <person name="Town C.D."/>
        </authorList>
    </citation>
    <scope>GENOME REANNOTATION</scope>
    <source>
        <strain>cv. Columbia</strain>
    </source>
</reference>
<reference key="3">
    <citation type="submission" date="2004-06" db="EMBL/GenBank/DDBJ databases">
        <title>Arabidopsis ORF clones.</title>
        <authorList>
            <person name="Cheuk R."/>
            <person name="Chen H."/>
            <person name="Kim C.J."/>
            <person name="Shinn P."/>
            <person name="Ecker J.R."/>
        </authorList>
    </citation>
    <scope>NUCLEOTIDE SEQUENCE [LARGE SCALE MRNA]</scope>
    <source>
        <strain>cv. Columbia</strain>
    </source>
</reference>
<reference key="4">
    <citation type="journal article" date="2016" name="Science">
        <title>Photoactivation and inactivation of Arabidopsis cryptochrome 2.</title>
        <authorList>
            <person name="Wang Q."/>
            <person name="Zuo Z."/>
            <person name="Wang X."/>
            <person name="Gu L."/>
            <person name="Yoshizumi T."/>
            <person name="Yang Z."/>
            <person name="Yang L."/>
            <person name="Liu Q."/>
            <person name="Liu W."/>
            <person name="Han Y.J."/>
            <person name="Kim J.I."/>
            <person name="Liu B."/>
            <person name="Wohlschlegel J.A."/>
            <person name="Matsui M."/>
            <person name="Oka Y."/>
            <person name="Lin C."/>
        </authorList>
    </citation>
    <scope>FUNCTION</scope>
    <scope>SUBCELLULAR LOCATION</scope>
    <scope>DISRUPTION PHENOTYPE</scope>
</reference>
<name>BIC2_ARATH</name>
<protein>
    <recommendedName>
        <fullName evidence="3">Protein BIC2</fullName>
    </recommendedName>
    <alternativeName>
        <fullName evidence="3">BLUE-LIGHT INHIBITOR OF CRYPTOCHROMES 2</fullName>
    </alternativeName>
</protein>
<evidence type="ECO:0000256" key="1">
    <source>
        <dbReference type="SAM" id="MobiDB-lite"/>
    </source>
</evidence>
<evidence type="ECO:0000269" key="2">
    <source>
    </source>
</evidence>
<evidence type="ECO:0000303" key="3">
    <source>
    </source>
</evidence>
<evidence type="ECO:0000312" key="4">
    <source>
        <dbReference type="Araport" id="AT3G44450"/>
    </source>
</evidence>
<evidence type="ECO:0000312" key="5">
    <source>
        <dbReference type="EMBL" id="CAB86923.1"/>
    </source>
</evidence>
<evidence type="ECO:0007829" key="6">
    <source>
        <dbReference type="PDB" id="6K8K"/>
    </source>
</evidence>
<comment type="function">
    <text evidence="2">Regulates the blue-light dependent dimerization of CRY2 and formation of photobodies. Inhibits CRY phosphorylation.</text>
</comment>
<comment type="subcellular location">
    <subcellularLocation>
        <location evidence="2">Nucleus</location>
    </subcellularLocation>
</comment>
<comment type="disruption phenotype">
    <text evidence="2">No visible phenotype. Bic1 and bic2 double mutants have a blue light-hypersensitive short-hypocotyl phenotype and an increased anthocyanin accumulation when grown in continuous blue light.</text>
</comment>
<proteinExistence type="evidence at protein level"/>
<accession>Q9M280</accession>
<organism>
    <name type="scientific">Arabidopsis thaliana</name>
    <name type="common">Mouse-ear cress</name>
    <dbReference type="NCBI Taxonomy" id="3702"/>
    <lineage>
        <taxon>Eukaryota</taxon>
        <taxon>Viridiplantae</taxon>
        <taxon>Streptophyta</taxon>
        <taxon>Embryophyta</taxon>
        <taxon>Tracheophyta</taxon>
        <taxon>Spermatophyta</taxon>
        <taxon>Magnoliopsida</taxon>
        <taxon>eudicotyledons</taxon>
        <taxon>Gunneridae</taxon>
        <taxon>Pentapetalae</taxon>
        <taxon>rosids</taxon>
        <taxon>malvids</taxon>
        <taxon>Brassicales</taxon>
        <taxon>Brassicaceae</taxon>
        <taxon>Camelineae</taxon>
        <taxon>Arabidopsis</taxon>
    </lineage>
</organism>
<dbReference type="EMBL" id="AL138641">
    <property type="protein sequence ID" value="CAB86923.1"/>
    <property type="molecule type" value="Genomic_DNA"/>
</dbReference>
<dbReference type="EMBL" id="CP002686">
    <property type="protein sequence ID" value="AEE77904.1"/>
    <property type="molecule type" value="Genomic_DNA"/>
</dbReference>
<dbReference type="EMBL" id="BT012513">
    <property type="protein sequence ID" value="AAS99657.1"/>
    <property type="molecule type" value="mRNA"/>
</dbReference>
<dbReference type="EMBL" id="BT014814">
    <property type="protein sequence ID" value="AAT41797.1"/>
    <property type="molecule type" value="mRNA"/>
</dbReference>
<dbReference type="PIR" id="T47435">
    <property type="entry name" value="T47435"/>
</dbReference>
<dbReference type="RefSeq" id="NP_190031.1">
    <property type="nucleotide sequence ID" value="NM_114313.5"/>
</dbReference>
<dbReference type="PDB" id="6K8K">
    <property type="method" value="X-ray"/>
    <property type="resolution" value="2.50 A"/>
    <property type="chains" value="C/E/F/H=33-97"/>
</dbReference>
<dbReference type="PDBsum" id="6K8K"/>
<dbReference type="SMR" id="Q9M280"/>
<dbReference type="FunCoup" id="Q9M280">
    <property type="interactions" value="1"/>
</dbReference>
<dbReference type="STRING" id="3702.Q9M280"/>
<dbReference type="PaxDb" id="3702-AT3G44450.1"/>
<dbReference type="EnsemblPlants" id="AT3G44450.1">
    <property type="protein sequence ID" value="AT3G44450.1"/>
    <property type="gene ID" value="AT3G44450"/>
</dbReference>
<dbReference type="GeneID" id="823570"/>
<dbReference type="Gramene" id="AT3G44450.1">
    <property type="protein sequence ID" value="AT3G44450.1"/>
    <property type="gene ID" value="AT3G44450"/>
</dbReference>
<dbReference type="KEGG" id="ath:AT3G44450"/>
<dbReference type="Araport" id="AT3G44450"/>
<dbReference type="TAIR" id="AT3G44450">
    <property type="gene designation" value="BIC2"/>
</dbReference>
<dbReference type="eggNOG" id="ENOG502S7VQ">
    <property type="taxonomic scope" value="Eukaryota"/>
</dbReference>
<dbReference type="HOGENOM" id="CLU_2100247_0_0_1"/>
<dbReference type="InParanoid" id="Q9M280"/>
<dbReference type="OMA" id="GLLMGWM"/>
<dbReference type="PhylomeDB" id="Q9M280"/>
<dbReference type="PRO" id="PR:Q9M280"/>
<dbReference type="Proteomes" id="UP000006548">
    <property type="component" value="Chromosome 3"/>
</dbReference>
<dbReference type="ExpressionAtlas" id="Q9M280">
    <property type="expression patterns" value="baseline and differential"/>
</dbReference>
<dbReference type="GO" id="GO:0005634">
    <property type="term" value="C:nucleus"/>
    <property type="evidence" value="ECO:0007669"/>
    <property type="project" value="UniProtKB-SubCell"/>
</dbReference>
<dbReference type="GO" id="GO:0009785">
    <property type="term" value="P:blue light signaling pathway"/>
    <property type="evidence" value="ECO:0000316"/>
    <property type="project" value="TAIR"/>
</dbReference>
<dbReference type="CDD" id="cd22645">
    <property type="entry name" value="BIC1_CID"/>
    <property type="match status" value="1"/>
</dbReference>
<dbReference type="InterPro" id="IPR040374">
    <property type="entry name" value="BIC"/>
</dbReference>
<dbReference type="PANTHER" id="PTHR34207">
    <property type="entry name" value="PROTEIN BIC1"/>
    <property type="match status" value="1"/>
</dbReference>
<dbReference type="PANTHER" id="PTHR34207:SF17">
    <property type="entry name" value="PROTEIN BIC2"/>
    <property type="match status" value="1"/>
</dbReference>